<gene>
    <name evidence="1" type="primary">mnmA1</name>
    <name type="ordered locus">CTC_01052</name>
</gene>
<reference key="1">
    <citation type="journal article" date="2003" name="Proc. Natl. Acad. Sci. U.S.A.">
        <title>The genome sequence of Clostridium tetani, the causative agent of tetanus disease.</title>
        <authorList>
            <person name="Brueggemann H."/>
            <person name="Baeumer S."/>
            <person name="Fricke W.F."/>
            <person name="Wiezer A."/>
            <person name="Liesegang H."/>
            <person name="Decker I."/>
            <person name="Herzberg C."/>
            <person name="Martinez-Arias R."/>
            <person name="Merkl R."/>
            <person name="Henne A."/>
            <person name="Gottschalk G."/>
        </authorList>
    </citation>
    <scope>NUCLEOTIDE SEQUENCE [LARGE SCALE GENOMIC DNA]</scope>
    <source>
        <strain>Massachusetts / E88</strain>
    </source>
</reference>
<dbReference type="EC" id="2.8.1.13" evidence="1"/>
<dbReference type="EMBL" id="AE015927">
    <property type="protein sequence ID" value="AAO35635.1"/>
    <property type="molecule type" value="Genomic_DNA"/>
</dbReference>
<dbReference type="SMR" id="Q896F5"/>
<dbReference type="STRING" id="212717.CTC_01052"/>
<dbReference type="KEGG" id="ctc:CTC_01052"/>
<dbReference type="HOGENOM" id="CLU_035188_0_0_9"/>
<dbReference type="Proteomes" id="UP000001412">
    <property type="component" value="Chromosome"/>
</dbReference>
<dbReference type="GO" id="GO:0005737">
    <property type="term" value="C:cytoplasm"/>
    <property type="evidence" value="ECO:0007669"/>
    <property type="project" value="UniProtKB-SubCell"/>
</dbReference>
<dbReference type="GO" id="GO:0005524">
    <property type="term" value="F:ATP binding"/>
    <property type="evidence" value="ECO:0007669"/>
    <property type="project" value="UniProtKB-KW"/>
</dbReference>
<dbReference type="GO" id="GO:0000049">
    <property type="term" value="F:tRNA binding"/>
    <property type="evidence" value="ECO:0007669"/>
    <property type="project" value="UniProtKB-KW"/>
</dbReference>
<dbReference type="GO" id="GO:0103016">
    <property type="term" value="F:tRNA-uridine 2-sulfurtransferase activity"/>
    <property type="evidence" value="ECO:0007669"/>
    <property type="project" value="UniProtKB-EC"/>
</dbReference>
<dbReference type="GO" id="GO:0002143">
    <property type="term" value="P:tRNA wobble position uridine thiolation"/>
    <property type="evidence" value="ECO:0007669"/>
    <property type="project" value="TreeGrafter"/>
</dbReference>
<dbReference type="CDD" id="cd01998">
    <property type="entry name" value="MnmA_TRMU-like"/>
    <property type="match status" value="1"/>
</dbReference>
<dbReference type="FunFam" id="2.30.30.280:FF:000001">
    <property type="entry name" value="tRNA-specific 2-thiouridylase MnmA"/>
    <property type="match status" value="1"/>
</dbReference>
<dbReference type="FunFam" id="2.40.30.10:FF:000023">
    <property type="entry name" value="tRNA-specific 2-thiouridylase MnmA"/>
    <property type="match status" value="1"/>
</dbReference>
<dbReference type="FunFam" id="3.40.50.620:FF:000115">
    <property type="entry name" value="tRNA-specific 2-thiouridylase MnmA"/>
    <property type="match status" value="1"/>
</dbReference>
<dbReference type="Gene3D" id="2.30.30.280">
    <property type="entry name" value="Adenine nucleotide alpha hydrolases-like domains"/>
    <property type="match status" value="1"/>
</dbReference>
<dbReference type="Gene3D" id="3.40.50.620">
    <property type="entry name" value="HUPs"/>
    <property type="match status" value="1"/>
</dbReference>
<dbReference type="Gene3D" id="2.40.30.10">
    <property type="entry name" value="Translation factors"/>
    <property type="match status" value="1"/>
</dbReference>
<dbReference type="HAMAP" id="MF_00144">
    <property type="entry name" value="tRNA_thiouridyl_MnmA"/>
    <property type="match status" value="1"/>
</dbReference>
<dbReference type="InterPro" id="IPR004506">
    <property type="entry name" value="MnmA-like"/>
</dbReference>
<dbReference type="InterPro" id="IPR046885">
    <property type="entry name" value="MnmA-like_C"/>
</dbReference>
<dbReference type="InterPro" id="IPR046884">
    <property type="entry name" value="MnmA-like_central"/>
</dbReference>
<dbReference type="InterPro" id="IPR023382">
    <property type="entry name" value="MnmA-like_central_sf"/>
</dbReference>
<dbReference type="InterPro" id="IPR014729">
    <property type="entry name" value="Rossmann-like_a/b/a_fold"/>
</dbReference>
<dbReference type="NCBIfam" id="NF001138">
    <property type="entry name" value="PRK00143.1"/>
    <property type="match status" value="1"/>
</dbReference>
<dbReference type="NCBIfam" id="TIGR00420">
    <property type="entry name" value="trmU"/>
    <property type="match status" value="1"/>
</dbReference>
<dbReference type="PANTHER" id="PTHR11933:SF5">
    <property type="entry name" value="MITOCHONDRIAL TRNA-SPECIFIC 2-THIOURIDYLASE 1"/>
    <property type="match status" value="1"/>
</dbReference>
<dbReference type="PANTHER" id="PTHR11933">
    <property type="entry name" value="TRNA 5-METHYLAMINOMETHYL-2-THIOURIDYLATE -METHYLTRANSFERASE"/>
    <property type="match status" value="1"/>
</dbReference>
<dbReference type="Pfam" id="PF03054">
    <property type="entry name" value="tRNA_Me_trans"/>
    <property type="match status" value="1"/>
</dbReference>
<dbReference type="Pfam" id="PF20258">
    <property type="entry name" value="tRNA_Me_trans_C"/>
    <property type="match status" value="1"/>
</dbReference>
<dbReference type="Pfam" id="PF20259">
    <property type="entry name" value="tRNA_Me_trans_M"/>
    <property type="match status" value="1"/>
</dbReference>
<dbReference type="SUPFAM" id="SSF52402">
    <property type="entry name" value="Adenine nucleotide alpha hydrolases-like"/>
    <property type="match status" value="1"/>
</dbReference>
<comment type="function">
    <text evidence="1">Catalyzes the 2-thiolation of uridine at the wobble position (U34) of tRNA, leading to the formation of s(2)U34.</text>
</comment>
<comment type="catalytic activity">
    <reaction evidence="1">
        <text>S-sulfanyl-L-cysteinyl-[protein] + uridine(34) in tRNA + AH2 + ATP = 2-thiouridine(34) in tRNA + L-cysteinyl-[protein] + A + AMP + diphosphate + H(+)</text>
        <dbReference type="Rhea" id="RHEA:47032"/>
        <dbReference type="Rhea" id="RHEA-COMP:10131"/>
        <dbReference type="Rhea" id="RHEA-COMP:11726"/>
        <dbReference type="Rhea" id="RHEA-COMP:11727"/>
        <dbReference type="Rhea" id="RHEA-COMP:11728"/>
        <dbReference type="ChEBI" id="CHEBI:13193"/>
        <dbReference type="ChEBI" id="CHEBI:15378"/>
        <dbReference type="ChEBI" id="CHEBI:17499"/>
        <dbReference type="ChEBI" id="CHEBI:29950"/>
        <dbReference type="ChEBI" id="CHEBI:30616"/>
        <dbReference type="ChEBI" id="CHEBI:33019"/>
        <dbReference type="ChEBI" id="CHEBI:61963"/>
        <dbReference type="ChEBI" id="CHEBI:65315"/>
        <dbReference type="ChEBI" id="CHEBI:87170"/>
        <dbReference type="ChEBI" id="CHEBI:456215"/>
        <dbReference type="EC" id="2.8.1.13"/>
    </reaction>
</comment>
<comment type="subcellular location">
    <subcellularLocation>
        <location evidence="1">Cytoplasm</location>
    </subcellularLocation>
</comment>
<comment type="similarity">
    <text evidence="1">Belongs to the MnmA/TRMU family.</text>
</comment>
<organism>
    <name type="scientific">Clostridium tetani (strain Massachusetts / E88)</name>
    <dbReference type="NCBI Taxonomy" id="212717"/>
    <lineage>
        <taxon>Bacteria</taxon>
        <taxon>Bacillati</taxon>
        <taxon>Bacillota</taxon>
        <taxon>Clostridia</taxon>
        <taxon>Eubacteriales</taxon>
        <taxon>Clostridiaceae</taxon>
        <taxon>Clostridium</taxon>
    </lineage>
</organism>
<protein>
    <recommendedName>
        <fullName evidence="1">tRNA-specific 2-thiouridylase MnmA 1</fullName>
        <ecNumber evidence="1">2.8.1.13</ecNumber>
    </recommendedName>
</protein>
<keyword id="KW-0067">ATP-binding</keyword>
<keyword id="KW-0963">Cytoplasm</keyword>
<keyword id="KW-1015">Disulfide bond</keyword>
<keyword id="KW-0547">Nucleotide-binding</keyword>
<keyword id="KW-1185">Reference proteome</keyword>
<keyword id="KW-0694">RNA-binding</keyword>
<keyword id="KW-0808">Transferase</keyword>
<keyword id="KW-0819">tRNA processing</keyword>
<keyword id="KW-0820">tRNA-binding</keyword>
<evidence type="ECO:0000255" key="1">
    <source>
        <dbReference type="HAMAP-Rule" id="MF_00144"/>
    </source>
</evidence>
<sequence>MVKKMKKKVVVGMSGGVDSSVTAYLLKEQGYDVIGMTMKVFPGNYHDGSKEKIEDIMKSAKEVCDFLEIPFVEVDLIEEFNKKVATPFMQDYIEGRTPNPCVYCNKHIKFDAFLNKAIELGADYIATGHYANIIEKDGRTLIYRAEDENKDQTYMLYNLKQHQLKHILMPCGDYNKEQIREIAKKIGLKIHNKKDSEEICFIPDDDHGRYIRENCKKKIQEGNFVDEKGKVLGRHKGIINYTIGQRKGLGIALGKPAYVIDIIPEKNQVVLGEEEKIFNNILIAKDVNFIPFDELKEKIKLEAKIRYSAKGEIAEIEPLENNRVKVTFDKKQRAITKGQSVVFYIENLLLGGGIIESVESST</sequence>
<accession>Q896F5</accession>
<feature type="chain" id="PRO_0000349599" description="tRNA-specific 2-thiouridylase MnmA 1">
    <location>
        <begin position="1"/>
        <end position="362"/>
    </location>
</feature>
<feature type="region of interest" description="Interaction with tRNA" evidence="1">
    <location>
        <begin position="150"/>
        <end position="152"/>
    </location>
</feature>
<feature type="region of interest" description="Interaction with tRNA" evidence="1">
    <location>
        <begin position="306"/>
        <end position="307"/>
    </location>
</feature>
<feature type="active site" description="Nucleophile" evidence="1">
    <location>
        <position position="104"/>
    </location>
</feature>
<feature type="active site" description="Cysteine persulfide intermediate" evidence="1">
    <location>
        <position position="200"/>
    </location>
</feature>
<feature type="binding site" evidence="1">
    <location>
        <begin position="12"/>
        <end position="19"/>
    </location>
    <ligand>
        <name>ATP</name>
        <dbReference type="ChEBI" id="CHEBI:30616"/>
    </ligand>
</feature>
<feature type="binding site" evidence="1">
    <location>
        <position position="38"/>
    </location>
    <ligand>
        <name>ATP</name>
        <dbReference type="ChEBI" id="CHEBI:30616"/>
    </ligand>
</feature>
<feature type="binding site" evidence="1">
    <location>
        <position position="128"/>
    </location>
    <ligand>
        <name>ATP</name>
        <dbReference type="ChEBI" id="CHEBI:30616"/>
    </ligand>
</feature>
<feature type="site" description="Interaction with tRNA" evidence="1">
    <location>
        <position position="129"/>
    </location>
</feature>
<feature type="site" description="Interaction with tRNA" evidence="1">
    <location>
        <position position="339"/>
    </location>
</feature>
<feature type="disulfide bond" description="Alternate" evidence="1">
    <location>
        <begin position="104"/>
        <end position="200"/>
    </location>
</feature>
<proteinExistence type="inferred from homology"/>
<name>MNMA1_CLOTE</name>